<comment type="function">
    <text evidence="1">inhibits Kv1.3/KCNA3 channel.</text>
</comment>
<comment type="subcellular location">
    <subcellularLocation>
        <location evidence="1">Secreted</location>
    </subcellularLocation>
</comment>
<comment type="tissue specificity">
    <text>Expressed by the venom gland.</text>
</comment>
<comment type="domain">
    <text evidence="3">Has the structural arrangement of an alpha-helix connected to antiparallel beta-sheets by disulfide bonds (CS-alpha/beta).</text>
</comment>
<comment type="miscellaneous">
    <text evidence="1">Negative results: does not block Kv7.1/KCNQ1 channels.</text>
</comment>
<comment type="similarity">
    <text evidence="3">Belongs to the short scorpion toxin superfamily. Potassium channel inhibitor family. Alpha-KTx 30 subfamily.</text>
</comment>
<comment type="caution">
    <text evidence="3">In PubMed:22511981, this sequence erroneously refers to SjKTx32.</text>
</comment>
<feature type="signal peptide" evidence="2">
    <location>
        <begin position="1"/>
        <end position="24"/>
    </location>
</feature>
<feature type="chain" id="PRO_0000424391" description="Potassium channel toxin alpha-KTx 30.3">
    <location>
        <begin position="25"/>
        <end position="66"/>
    </location>
</feature>
<feature type="disulfide bond" evidence="1">
    <location>
        <begin position="30"/>
        <end position="50"/>
    </location>
</feature>
<feature type="disulfide bond" evidence="1">
    <location>
        <begin position="36"/>
        <end position="55"/>
    </location>
</feature>
<feature type="disulfide bond" evidence="1">
    <location>
        <begin position="40"/>
        <end position="57"/>
    </location>
</feature>
<evidence type="ECO:0000250" key="1"/>
<evidence type="ECO:0000255" key="2"/>
<evidence type="ECO:0000305" key="3"/>
<dbReference type="EMBL" id="GH548307">
    <property type="status" value="NOT_ANNOTATED_CDS"/>
    <property type="molecule type" value="mRNA"/>
</dbReference>
<dbReference type="SMR" id="P0DL35"/>
<dbReference type="TCDB" id="8.B.8.1.6">
    <property type="family name" value="the Alpha-ktx15 scorpion toxin (Alpha-ktx15) family"/>
</dbReference>
<dbReference type="GO" id="GO:0005576">
    <property type="term" value="C:extracellular region"/>
    <property type="evidence" value="ECO:0007669"/>
    <property type="project" value="UniProtKB-SubCell"/>
</dbReference>
<dbReference type="GO" id="GO:0015459">
    <property type="term" value="F:potassium channel regulator activity"/>
    <property type="evidence" value="ECO:0007669"/>
    <property type="project" value="UniProtKB-KW"/>
</dbReference>
<dbReference type="GO" id="GO:0090729">
    <property type="term" value="F:toxin activity"/>
    <property type="evidence" value="ECO:0007669"/>
    <property type="project" value="UniProtKB-KW"/>
</dbReference>
<dbReference type="Gene3D" id="3.30.30.10">
    <property type="entry name" value="Knottin, scorpion toxin-like"/>
    <property type="match status" value="1"/>
</dbReference>
<dbReference type="InterPro" id="IPR036574">
    <property type="entry name" value="Scorpion_toxin-like_sf"/>
</dbReference>
<dbReference type="SUPFAM" id="SSF57095">
    <property type="entry name" value="Scorpion toxin-like"/>
    <property type="match status" value="1"/>
</dbReference>
<keyword id="KW-1015">Disulfide bond</keyword>
<keyword id="KW-0872">Ion channel impairing toxin</keyword>
<keyword id="KW-0528">Neurotoxin</keyword>
<keyword id="KW-0632">Potassium channel impairing toxin</keyword>
<keyword id="KW-0964">Secreted</keyword>
<keyword id="KW-0732">Signal</keyword>
<keyword id="KW-0800">Toxin</keyword>
<keyword id="KW-1220">Voltage-gated potassium channel impairing toxin</keyword>
<sequence length="66" mass="7390">MNKTFFLVVIMATVLVLAFDATDAQTNVRCTNTRDCFSFCSQFTNVHPACLGDYCECLRWEGGISI</sequence>
<protein>
    <recommendedName>
        <fullName>Potassium channel toxin alpha-KTx 30.3</fullName>
    </recommendedName>
    <alternativeName>
        <fullName>Toxin SjKTx51</fullName>
    </alternativeName>
</protein>
<reference key="1">
    <citation type="journal article" date="2009" name="BMC Genomics">
        <title>Transcriptome analysis of the venom gland of the scorpion Scorpiops jendeki: implication for the evolution of the scorpion venom arsenal.</title>
        <authorList>
            <person name="Ma Y."/>
            <person name="Zhao R."/>
            <person name="He Y."/>
            <person name="Li S."/>
            <person name="Liu J."/>
            <person name="Wu Y."/>
            <person name="Cao Z."/>
            <person name="Li W."/>
        </authorList>
    </citation>
    <scope>NUCLEOTIDE SEQUENCE [MRNA]</scope>
    <source>
        <tissue>Venom gland</tissue>
    </source>
</reference>
<reference key="2">
    <citation type="journal article" date="2012" name="PLoS ONE">
        <title>Structural and functional diversity of acidic scorpion potassium channel toxins.</title>
        <authorList>
            <person name="Chen Z.Y."/>
            <person name="Zeng D.Y."/>
            <person name="Hu Y.T."/>
            <person name="He Y.W."/>
            <person name="Pan N."/>
            <person name="Ding J.P."/>
            <person name="Cao Z.J."/>
            <person name="Liu M.L."/>
            <person name="Li W.X."/>
            <person name="Yi H."/>
            <person name="Jiang L."/>
            <person name="Wu Y.L."/>
        </authorList>
    </citation>
    <scope>NUCLEOTIDE SEQUENCE [MRNA]</scope>
    <source>
        <tissue>Venom gland</tissue>
    </source>
</reference>
<proteinExistence type="evidence at transcript level"/>
<name>KA303_SCOJE</name>
<organism>
    <name type="scientific">Scorpiops jendeki</name>
    <name type="common">Scorpion</name>
    <name type="synonym">Scorpiops hardwickii jendeki</name>
    <dbReference type="NCBI Taxonomy" id="587368"/>
    <lineage>
        <taxon>Eukaryota</taxon>
        <taxon>Metazoa</taxon>
        <taxon>Ecdysozoa</taxon>
        <taxon>Arthropoda</taxon>
        <taxon>Chelicerata</taxon>
        <taxon>Arachnida</taxon>
        <taxon>Scorpiones</taxon>
        <taxon>Iurida</taxon>
        <taxon>Chactoidea</taxon>
        <taxon>Euscorpiidae</taxon>
        <taxon>Scorpiopinae</taxon>
        <taxon>Scorpiopini</taxon>
        <taxon>Scorpiops</taxon>
    </lineage>
</organism>
<accession>P0DL35</accession>